<feature type="signal peptide" evidence="2">
    <location>
        <begin position="1"/>
        <end position="25"/>
    </location>
</feature>
<feature type="chain" id="PRO_0000017663" description="Protein ERGIC-53-like">
    <location>
        <begin position="26"/>
        <end position="526"/>
    </location>
</feature>
<feature type="topological domain" description="Lumenal" evidence="2">
    <location>
        <begin position="26"/>
        <end position="462"/>
    </location>
</feature>
<feature type="transmembrane region" description="Helical" evidence="2">
    <location>
        <begin position="463"/>
        <end position="483"/>
    </location>
</feature>
<feature type="topological domain" description="Cytoplasmic" evidence="2">
    <location>
        <begin position="484"/>
        <end position="526"/>
    </location>
</feature>
<feature type="domain" description="L-type lectin-like" evidence="3">
    <location>
        <begin position="31"/>
        <end position="252"/>
    </location>
</feature>
<feature type="glycosylation site" description="N-linked (GlcNAc...) asparagine" evidence="2">
    <location>
        <position position="75"/>
    </location>
</feature>
<feature type="disulfide bond" evidence="3">
    <location>
        <begin position="176"/>
        <end position="215"/>
    </location>
</feature>
<feature type="splice variant" id="VSP_013143" description="In isoform 3." evidence="5">
    <original>DDHDVLSFLTFSLSEPSPE</original>
    <variation>GEDPTGQ</variation>
    <location>
        <begin position="240"/>
        <end position="258"/>
    </location>
</feature>
<feature type="sequence variant" id="VAR_049771" description="In dbSNP:rs3803568.">
    <original>R</original>
    <variation>Q</variation>
    <location>
        <position position="105"/>
    </location>
</feature>
<feature type="sequence variant" id="VAR_049772" description="In dbSNP:rs1060480.">
    <original>R</original>
    <variation>S</variation>
    <location>
        <position position="517"/>
    </location>
</feature>
<feature type="sequence conflict" description="In Ref. 1; AAG30902." evidence="6" ref="1">
    <original>Q</original>
    <variation>H</variation>
    <location>
        <position position="108"/>
    </location>
</feature>
<feature type="sequence conflict" description="In Ref. 2; AAQ89086." evidence="6" ref="2">
    <original>P</original>
    <variation>S</variation>
    <location>
        <position position="186"/>
    </location>
</feature>
<accession>Q9HAT1</accession>
<accession>Q6UWN2</accession>
<evidence type="ECO:0000250" key="1"/>
<evidence type="ECO:0000255" key="2"/>
<evidence type="ECO:0000255" key="3">
    <source>
        <dbReference type="PROSITE-ProRule" id="PRU00658"/>
    </source>
</evidence>
<evidence type="ECO:0000269" key="4">
    <source>
    </source>
</evidence>
<evidence type="ECO:0000303" key="5">
    <source>
    </source>
</evidence>
<evidence type="ECO:0000305" key="6"/>
<dbReference type="EMBL" id="AF303398">
    <property type="protein sequence ID" value="AAG30902.1"/>
    <property type="molecule type" value="mRNA"/>
</dbReference>
<dbReference type="EMBL" id="AY358724">
    <property type="protein sequence ID" value="AAQ89086.1"/>
    <property type="molecule type" value="mRNA"/>
</dbReference>
<dbReference type="CCDS" id="CCDS10270.1">
    <molecule id="Q9HAT1-1"/>
</dbReference>
<dbReference type="RefSeq" id="NP_068591.2">
    <molecule id="Q9HAT1-1"/>
    <property type="nucleotide sequence ID" value="NM_021819.3"/>
</dbReference>
<dbReference type="SMR" id="Q9HAT1"/>
<dbReference type="BioGRID" id="122860">
    <property type="interactions" value="20"/>
</dbReference>
<dbReference type="FunCoup" id="Q9HAT1">
    <property type="interactions" value="174"/>
</dbReference>
<dbReference type="IntAct" id="Q9HAT1">
    <property type="interactions" value="8"/>
</dbReference>
<dbReference type="STRING" id="9606.ENSP00000310431"/>
<dbReference type="GlyCosmos" id="Q9HAT1">
    <property type="glycosylation" value="1 site, No reported glycans"/>
</dbReference>
<dbReference type="GlyGen" id="Q9HAT1">
    <property type="glycosylation" value="1 site"/>
</dbReference>
<dbReference type="iPTMnet" id="Q9HAT1"/>
<dbReference type="PhosphoSitePlus" id="Q9HAT1"/>
<dbReference type="BioMuta" id="LMAN1L"/>
<dbReference type="DMDM" id="61252672"/>
<dbReference type="MassIVE" id="Q9HAT1"/>
<dbReference type="PaxDb" id="9606-ENSP00000310431"/>
<dbReference type="PeptideAtlas" id="Q9HAT1"/>
<dbReference type="ProteomicsDB" id="81427">
    <molecule id="Q9HAT1-1"/>
</dbReference>
<dbReference type="ProteomicsDB" id="81428">
    <molecule id="Q9HAT1-3"/>
</dbReference>
<dbReference type="Antibodypedia" id="55435">
    <property type="antibodies" value="96 antibodies from 16 providers"/>
</dbReference>
<dbReference type="DNASU" id="79748"/>
<dbReference type="Ensembl" id="ENST00000309664.10">
    <molecule id="Q9HAT1-1"/>
    <property type="protein sequence ID" value="ENSP00000310431.5"/>
    <property type="gene ID" value="ENSG00000140506.17"/>
</dbReference>
<dbReference type="Ensembl" id="ENST00000379709.7">
    <molecule id="Q9HAT1-3"/>
    <property type="protein sequence ID" value="ENSP00000369031.3"/>
    <property type="gene ID" value="ENSG00000140506.17"/>
</dbReference>
<dbReference type="GeneID" id="79748"/>
<dbReference type="KEGG" id="hsa:79748"/>
<dbReference type="MANE-Select" id="ENST00000309664.10">
    <property type="protein sequence ID" value="ENSP00000310431.5"/>
    <property type="RefSeq nucleotide sequence ID" value="NM_021819.3"/>
    <property type="RefSeq protein sequence ID" value="NP_068591.2"/>
</dbReference>
<dbReference type="UCSC" id="uc002ayt.2">
    <molecule id="Q9HAT1-1"/>
    <property type="organism name" value="human"/>
</dbReference>
<dbReference type="AGR" id="HGNC:6632"/>
<dbReference type="CTD" id="79748"/>
<dbReference type="DisGeNET" id="79748"/>
<dbReference type="GeneCards" id="LMAN1L"/>
<dbReference type="HGNC" id="HGNC:6632">
    <property type="gene designation" value="LMAN1L"/>
</dbReference>
<dbReference type="HPA" id="ENSG00000140506">
    <property type="expression patterns" value="Group enriched (brain, heart muscle, lymphoid tissue, prostate, salivary gland)"/>
</dbReference>
<dbReference type="MalaCards" id="LMAN1L"/>
<dbReference type="MIM" id="609548">
    <property type="type" value="gene"/>
</dbReference>
<dbReference type="neXtProt" id="NX_Q9HAT1"/>
<dbReference type="OpenTargets" id="ENSG00000140506"/>
<dbReference type="PharmGKB" id="PA30400"/>
<dbReference type="VEuPathDB" id="HostDB:ENSG00000140506"/>
<dbReference type="eggNOG" id="KOG3838">
    <property type="taxonomic scope" value="Eukaryota"/>
</dbReference>
<dbReference type="GeneTree" id="ENSGT00940000161890"/>
<dbReference type="HOGENOM" id="CLU_041093_4_1_1"/>
<dbReference type="InParanoid" id="Q9HAT1"/>
<dbReference type="OMA" id="IRPEGGW"/>
<dbReference type="OrthoDB" id="10265193at2759"/>
<dbReference type="PAN-GO" id="Q9HAT1">
    <property type="GO annotations" value="8 GO annotations based on evolutionary models"/>
</dbReference>
<dbReference type="PhylomeDB" id="Q9HAT1"/>
<dbReference type="TreeFam" id="TF313311"/>
<dbReference type="PathwayCommons" id="Q9HAT1"/>
<dbReference type="Reactome" id="R-HSA-204005">
    <property type="pathway name" value="COPII-mediated vesicle transport"/>
</dbReference>
<dbReference type="Reactome" id="R-HSA-5694530">
    <property type="pathway name" value="Cargo concentration in the ER"/>
</dbReference>
<dbReference type="SignaLink" id="Q9HAT1"/>
<dbReference type="BioGRID-ORCS" id="79748">
    <property type="hits" value="12 hits in 1136 CRISPR screens"/>
</dbReference>
<dbReference type="ChiTaRS" id="LMAN1L">
    <property type="organism name" value="human"/>
</dbReference>
<dbReference type="GenomeRNAi" id="79748"/>
<dbReference type="Pharos" id="Q9HAT1">
    <property type="development level" value="Tbio"/>
</dbReference>
<dbReference type="PRO" id="PR:Q9HAT1"/>
<dbReference type="Proteomes" id="UP000005640">
    <property type="component" value="Chromosome 15"/>
</dbReference>
<dbReference type="RNAct" id="Q9HAT1">
    <property type="molecule type" value="protein"/>
</dbReference>
<dbReference type="Bgee" id="ENSG00000140506">
    <property type="expression patterns" value="Expressed in right atrium auricular region and 77 other cell types or tissues"/>
</dbReference>
<dbReference type="ExpressionAtlas" id="Q9HAT1">
    <property type="expression patterns" value="baseline and differential"/>
</dbReference>
<dbReference type="GO" id="GO:0062023">
    <property type="term" value="C:collagen-containing extracellular matrix"/>
    <property type="evidence" value="ECO:0007005"/>
    <property type="project" value="BHF-UCL"/>
</dbReference>
<dbReference type="GO" id="GO:0030134">
    <property type="term" value="C:COPII-coated ER to Golgi transport vesicle"/>
    <property type="evidence" value="ECO:0000318"/>
    <property type="project" value="GO_Central"/>
</dbReference>
<dbReference type="GO" id="GO:0005789">
    <property type="term" value="C:endoplasmic reticulum membrane"/>
    <property type="evidence" value="ECO:0000318"/>
    <property type="project" value="GO_Central"/>
</dbReference>
<dbReference type="GO" id="GO:0005793">
    <property type="term" value="C:endoplasmic reticulum-Golgi intermediate compartment"/>
    <property type="evidence" value="ECO:0000318"/>
    <property type="project" value="GO_Central"/>
</dbReference>
<dbReference type="GO" id="GO:0033116">
    <property type="term" value="C:endoplasmic reticulum-Golgi intermediate compartment membrane"/>
    <property type="evidence" value="ECO:0007669"/>
    <property type="project" value="UniProtKB-SubCell"/>
</dbReference>
<dbReference type="GO" id="GO:0000139">
    <property type="term" value="C:Golgi membrane"/>
    <property type="evidence" value="ECO:0000318"/>
    <property type="project" value="GO_Central"/>
</dbReference>
<dbReference type="GO" id="GO:0005537">
    <property type="term" value="F:D-mannose binding"/>
    <property type="evidence" value="ECO:0000318"/>
    <property type="project" value="GO_Central"/>
</dbReference>
<dbReference type="GO" id="GO:0006888">
    <property type="term" value="P:endoplasmic reticulum to Golgi vesicle-mediated transport"/>
    <property type="evidence" value="ECO:0000318"/>
    <property type="project" value="GO_Central"/>
</dbReference>
<dbReference type="FunFam" id="2.60.120.200:FF:000028">
    <property type="entry name" value="Blast:Protein ERGIC-53"/>
    <property type="match status" value="1"/>
</dbReference>
<dbReference type="Gene3D" id="2.60.120.200">
    <property type="match status" value="1"/>
</dbReference>
<dbReference type="InterPro" id="IPR013320">
    <property type="entry name" value="ConA-like_dom_sf"/>
</dbReference>
<dbReference type="InterPro" id="IPR051136">
    <property type="entry name" value="Intracellular_Lectin-GPT"/>
</dbReference>
<dbReference type="InterPro" id="IPR005052">
    <property type="entry name" value="Lectin_leg"/>
</dbReference>
<dbReference type="PANTHER" id="PTHR12223:SF31">
    <property type="entry name" value="PROTEIN ERGIC-53-LIKE"/>
    <property type="match status" value="1"/>
</dbReference>
<dbReference type="PANTHER" id="PTHR12223">
    <property type="entry name" value="VESICULAR MANNOSE-BINDING LECTIN"/>
    <property type="match status" value="1"/>
</dbReference>
<dbReference type="Pfam" id="PF03388">
    <property type="entry name" value="Lectin_leg-like"/>
    <property type="match status" value="1"/>
</dbReference>
<dbReference type="SUPFAM" id="SSF49899">
    <property type="entry name" value="Concanavalin A-like lectins/glucanases"/>
    <property type="match status" value="1"/>
</dbReference>
<dbReference type="PROSITE" id="PS51328">
    <property type="entry name" value="L_LECTIN_LIKE"/>
    <property type="match status" value="1"/>
</dbReference>
<reference key="1">
    <citation type="journal article" date="2001" name="Gene">
        <title>ERGL, a novel gene related to ERGIC-53 that is highly expressed in normal and neoplastic prostate and several other tissues.</title>
        <authorList>
            <person name="Yerushalmi N."/>
            <person name="Keppler-Hafkemeyer A."/>
            <person name="Vasmatzis G."/>
            <person name="Liu X.-F."/>
            <person name="Olsson P."/>
            <person name="Bera T.K."/>
            <person name="Duray P."/>
            <person name="Lee B."/>
            <person name="Pastan I."/>
        </authorList>
    </citation>
    <scope>NUCLEOTIDE SEQUENCE [MRNA] (ISOFORM 1)</scope>
    <scope>TISSUE SPECIFICITY</scope>
    <scope>ALTERNATIVE SPLICING</scope>
</reference>
<reference key="2">
    <citation type="journal article" date="2003" name="Genome Res.">
        <title>The secreted protein discovery initiative (SPDI), a large-scale effort to identify novel human secreted and transmembrane proteins: a bioinformatics assessment.</title>
        <authorList>
            <person name="Clark H.F."/>
            <person name="Gurney A.L."/>
            <person name="Abaya E."/>
            <person name="Baker K."/>
            <person name="Baldwin D.T."/>
            <person name="Brush J."/>
            <person name="Chen J."/>
            <person name="Chow B."/>
            <person name="Chui C."/>
            <person name="Crowley C."/>
            <person name="Currell B."/>
            <person name="Deuel B."/>
            <person name="Dowd P."/>
            <person name="Eaton D."/>
            <person name="Foster J.S."/>
            <person name="Grimaldi C."/>
            <person name="Gu Q."/>
            <person name="Hass P.E."/>
            <person name="Heldens S."/>
            <person name="Huang A."/>
            <person name="Kim H.S."/>
            <person name="Klimowski L."/>
            <person name="Jin Y."/>
            <person name="Johnson S."/>
            <person name="Lee J."/>
            <person name="Lewis L."/>
            <person name="Liao D."/>
            <person name="Mark M.R."/>
            <person name="Robbie E."/>
            <person name="Sanchez C."/>
            <person name="Schoenfeld J."/>
            <person name="Seshagiri S."/>
            <person name="Simmons L."/>
            <person name="Singh J."/>
            <person name="Smith V."/>
            <person name="Stinson J."/>
            <person name="Vagts A."/>
            <person name="Vandlen R.L."/>
            <person name="Watanabe C."/>
            <person name="Wieand D."/>
            <person name="Woods K."/>
            <person name="Xie M.-H."/>
            <person name="Yansura D.G."/>
            <person name="Yi S."/>
            <person name="Yu G."/>
            <person name="Yuan J."/>
            <person name="Zhang M."/>
            <person name="Zhang Z."/>
            <person name="Goddard A.D."/>
            <person name="Wood W.I."/>
            <person name="Godowski P.J."/>
            <person name="Gray A.M."/>
        </authorList>
    </citation>
    <scope>NUCLEOTIDE SEQUENCE [LARGE SCALE MRNA] (ISOFORM 3)</scope>
</reference>
<name>LMA1L_HUMAN</name>
<proteinExistence type="evidence at transcript level"/>
<keyword id="KW-0025">Alternative splicing</keyword>
<keyword id="KW-1015">Disulfide bond</keyword>
<keyword id="KW-0325">Glycoprotein</keyword>
<keyword id="KW-0430">Lectin</keyword>
<keyword id="KW-0472">Membrane</keyword>
<keyword id="KW-1185">Reference proteome</keyword>
<keyword id="KW-0732">Signal</keyword>
<keyword id="KW-0812">Transmembrane</keyword>
<keyword id="KW-1133">Transmembrane helix</keyword>
<organism>
    <name type="scientific">Homo sapiens</name>
    <name type="common">Human</name>
    <dbReference type="NCBI Taxonomy" id="9606"/>
    <lineage>
        <taxon>Eukaryota</taxon>
        <taxon>Metazoa</taxon>
        <taxon>Chordata</taxon>
        <taxon>Craniata</taxon>
        <taxon>Vertebrata</taxon>
        <taxon>Euteleostomi</taxon>
        <taxon>Mammalia</taxon>
        <taxon>Eutheria</taxon>
        <taxon>Euarchontoglires</taxon>
        <taxon>Primates</taxon>
        <taxon>Haplorrhini</taxon>
        <taxon>Catarrhini</taxon>
        <taxon>Hominidae</taxon>
        <taxon>Homo</taxon>
    </lineage>
</organism>
<comment type="subcellular location">
    <subcellularLocation>
        <location evidence="1">Endoplasmic reticulum-Golgi intermediate compartment membrane</location>
        <topology evidence="1">Single-pass type I membrane protein</topology>
    </subcellularLocation>
</comment>
<comment type="alternative products">
    <event type="alternative splicing"/>
    <isoform>
        <id>Q9HAT1-1</id>
        <name>1</name>
        <sequence type="displayed"/>
    </isoform>
    <isoform>
        <id>Q9HAT1-2</id>
        <name>2</name>
        <sequence type="not described"/>
    </isoform>
    <isoform>
        <id>Q9HAT1-3</id>
        <name>3</name>
        <sequence type="described" ref="VSP_013143"/>
    </isoform>
</comment>
<comment type="tissue specificity">
    <text evidence="4">Highly expressed in normal and neoplastic prostate. Also expressed in cardiac atrium, salivary gland, spleen and selective cells in the CNS.</text>
</comment>
<protein>
    <recommendedName>
        <fullName>Protein ERGIC-53-like</fullName>
    </recommendedName>
    <alternativeName>
        <fullName>ERGIC53-like protein</fullName>
    </alternativeName>
    <alternativeName>
        <fullName>Lectin mannose-binding 1-like</fullName>
        <shortName>LMAN1-like protein</shortName>
    </alternativeName>
</protein>
<gene>
    <name type="primary">LMAN1L</name>
    <name type="synonym">ERGL</name>
    <name type="ORF">UNQ2784/PRO7174</name>
</gene>
<sequence>MPAVSGPGPLFCLLLLLLDPHSPETGCPPLRRFEYKLSFKGPRLALPGAGIPFWSHHGDAILGLEEVRLTPSMRNRSGAVWSRASVPFSAWEVEVQMRVTGLGRRGAQGMAVWYTRGRGHVGSVLGGLASWDGIGIFFDSPAEDTQDSPAIRVLASDGHIPSEQPGDGASQGLGSCHWDFRNRPHPFRARITYWGQRLRMSLNSGLTPSDPGEFCVDVGPLLLVPGGFFGVSAATGTLADDHDVLSFLTFSLSEPSPEVPPQPFLEMQQLRLARQLEGLWARLGLGTREDVTPKSDSEAQGEGERLFDLEETLGRHRRILQALRGLSKQLAQAERQWKKQLGPPGQARPDGGWALDASCQIPSTPGRGGHLSMSLNKDSAKVGALLHGQWTLLQALQEMRDAAVRMAAEAQVSYLPVGIEHHFLELDHILGLLQEELRGPAKAAAKAPRPPGQPPRASSCLQPGIFLFYLLIQTVGFFGYVHFRQELNKSLQECLSTGSLPLGPAPHTPRALGILRRQPLPASMPA</sequence>